<accession>Q2G1G8</accession>
<reference key="1">
    <citation type="book" date="2006" name="Gram positive pathogens, 2nd edition">
        <title>The Staphylococcus aureus NCTC 8325 genome.</title>
        <editorList>
            <person name="Fischetti V."/>
            <person name="Novick R."/>
            <person name="Ferretti J."/>
            <person name="Portnoy D."/>
            <person name="Rood J."/>
        </editorList>
        <authorList>
            <person name="Gillaspy A.F."/>
            <person name="Worrell V."/>
            <person name="Orvis J."/>
            <person name="Roe B.A."/>
            <person name="Dyer D.W."/>
            <person name="Iandolo J.J."/>
        </authorList>
    </citation>
    <scope>NUCLEOTIDE SEQUENCE [LARGE SCALE GENOMIC DNA]</scope>
    <source>
        <strain>NCTC 8325 / PS 47</strain>
    </source>
</reference>
<comment type="function">
    <text evidence="1">The phosphoenolpyruvate-dependent sugar phosphotransferase system (sugar PTS), a major carbohydrate active transport system, catalyzes the phosphorylation of incoming sugar substrates concomitantly with their translocation across the cell membrane. This system is involved in glucose transport.</text>
</comment>
<comment type="catalytic activity">
    <reaction evidence="1">
        <text>N(pros)-phospho-L-histidyl-[protein] + D-glucose(out) = D-glucose 6-phosphate(in) + L-histidyl-[protein]</text>
        <dbReference type="Rhea" id="RHEA:33367"/>
        <dbReference type="Rhea" id="RHEA-COMP:9745"/>
        <dbReference type="Rhea" id="RHEA-COMP:9746"/>
        <dbReference type="ChEBI" id="CHEBI:4167"/>
        <dbReference type="ChEBI" id="CHEBI:29979"/>
        <dbReference type="ChEBI" id="CHEBI:61548"/>
        <dbReference type="ChEBI" id="CHEBI:64837"/>
        <dbReference type="EC" id="2.7.1.199"/>
    </reaction>
</comment>
<comment type="subcellular location">
    <subcellularLocation>
        <location evidence="4">Cell membrane</location>
        <topology evidence="4">Multi-pass membrane protein</topology>
    </subcellularLocation>
</comment>
<comment type="domain">
    <text evidence="4">The EIIC domain forms the PTS system translocation channel and contains the specific substrate-binding site.</text>
</comment>
<comment type="domain">
    <text evidence="3">The EIIB domain is phosphorylated by phospho-EIIA on a cysteinyl or histidyl residue, depending on the transported sugar. Then, it transfers the phosphoryl group to the sugar substrate concomitantly with the sugar uptake processed by the EIIC domain.</text>
</comment>
<comment type="domain">
    <text evidence="2">The EIIA domain is phosphorylated by phospho-HPr on a histidyl residue. Then, it transfers the phosphoryl group to the EIIB domain.</text>
</comment>
<comment type="sequence caution" evidence="5">
    <conflict type="erroneous initiation">
        <sequence resource="EMBL-CDS" id="ABD29335"/>
    </conflict>
</comment>
<protein>
    <recommendedName>
        <fullName evidence="1">PTS system glucose-specific EIICBA component</fullName>
        <ecNumber evidence="1">2.7.1.199</ecNumber>
    </recommendedName>
    <alternativeName>
        <fullName evidence="1">EIICBA-Glc</fullName>
        <shortName evidence="1">EII-Glc</shortName>
    </alternativeName>
    <alternativeName>
        <fullName evidence="5">EIICBA-Glc 1</fullName>
    </alternativeName>
    <domain>
        <recommendedName>
            <fullName evidence="1">Glucose permease IIC component</fullName>
        </recommendedName>
        <alternativeName>
            <fullName evidence="1">PTS system glucose-specific EIIC component</fullName>
        </alternativeName>
    </domain>
    <domain>
        <recommendedName>
            <fullName evidence="1">Glucose-specific phosphotransferase enzyme IIB component</fullName>
        </recommendedName>
        <alternativeName>
            <fullName evidence="1">PTS system glucose-specific EIIB component</fullName>
        </alternativeName>
    </domain>
    <domain>
        <recommendedName>
            <fullName evidence="1">Glucose-specific phosphotransferase enzyme IIA component</fullName>
        </recommendedName>
        <alternativeName>
            <fullName evidence="1">PTS system glucose-specific EIIA component</fullName>
        </alternativeName>
    </domain>
</protein>
<organism>
    <name type="scientific">Staphylococcus aureus (strain NCTC 8325 / PS 47)</name>
    <dbReference type="NCBI Taxonomy" id="93061"/>
    <lineage>
        <taxon>Bacteria</taxon>
        <taxon>Bacillati</taxon>
        <taxon>Bacillota</taxon>
        <taxon>Bacilli</taxon>
        <taxon>Bacillales</taxon>
        <taxon>Staphylococcaceae</taxon>
        <taxon>Staphylococcus</taxon>
    </lineage>
</organism>
<name>PTG3C_STAA8</name>
<proteinExistence type="inferred from homology"/>
<keyword id="KW-1003">Cell membrane</keyword>
<keyword id="KW-0418">Kinase</keyword>
<keyword id="KW-0472">Membrane</keyword>
<keyword id="KW-0598">Phosphotransferase system</keyword>
<keyword id="KW-1185">Reference proteome</keyword>
<keyword id="KW-0762">Sugar transport</keyword>
<keyword id="KW-0808">Transferase</keyword>
<keyword id="KW-0812">Transmembrane</keyword>
<keyword id="KW-1133">Transmembrane helix</keyword>
<keyword id="KW-0813">Transport</keyword>
<dbReference type="EC" id="2.7.1.199" evidence="1"/>
<dbReference type="EMBL" id="CP000253">
    <property type="protein sequence ID" value="ABD29335.1"/>
    <property type="status" value="ALT_INIT"/>
    <property type="molecule type" value="Genomic_DNA"/>
</dbReference>
<dbReference type="RefSeq" id="WP_001227724.1">
    <property type="nucleotide sequence ID" value="NZ_LS483365.1"/>
</dbReference>
<dbReference type="RefSeq" id="WP_011446978.1">
    <property type="nucleotide sequence ID" value="NC_007795.1"/>
</dbReference>
<dbReference type="RefSeq" id="YP_498754.1">
    <property type="nucleotide sequence ID" value="NC_007795.1"/>
</dbReference>
<dbReference type="SMR" id="Q2G1G8"/>
<dbReference type="STRING" id="93061.SAOUHSC_00155"/>
<dbReference type="PaxDb" id="1280-SAXN108_0175"/>
<dbReference type="GeneID" id="3919863"/>
<dbReference type="KEGG" id="sao:SAOUHSC_00155"/>
<dbReference type="PATRIC" id="fig|93061.5.peg.145"/>
<dbReference type="eggNOG" id="COG1263">
    <property type="taxonomic scope" value="Bacteria"/>
</dbReference>
<dbReference type="eggNOG" id="COG1264">
    <property type="taxonomic scope" value="Bacteria"/>
</dbReference>
<dbReference type="eggNOG" id="COG2190">
    <property type="taxonomic scope" value="Bacteria"/>
</dbReference>
<dbReference type="HOGENOM" id="CLU_012312_1_1_9"/>
<dbReference type="OrthoDB" id="9764327at2"/>
<dbReference type="Proteomes" id="UP000008816">
    <property type="component" value="Chromosome"/>
</dbReference>
<dbReference type="GO" id="GO:0005886">
    <property type="term" value="C:plasma membrane"/>
    <property type="evidence" value="ECO:0000318"/>
    <property type="project" value="GO_Central"/>
</dbReference>
<dbReference type="GO" id="GO:0055056">
    <property type="term" value="F:D-glucose transmembrane transporter activity"/>
    <property type="evidence" value="ECO:0007669"/>
    <property type="project" value="InterPro"/>
</dbReference>
<dbReference type="GO" id="GO:0016301">
    <property type="term" value="F:kinase activity"/>
    <property type="evidence" value="ECO:0007669"/>
    <property type="project" value="UniProtKB-KW"/>
</dbReference>
<dbReference type="GO" id="GO:0008982">
    <property type="term" value="F:protein-N(PI)-phosphohistidine-sugar phosphotransferase activity"/>
    <property type="evidence" value="ECO:0007669"/>
    <property type="project" value="InterPro"/>
</dbReference>
<dbReference type="GO" id="GO:0090563">
    <property type="term" value="F:protein-phosphocysteine-sugar phosphotransferase activity"/>
    <property type="evidence" value="ECO:0000318"/>
    <property type="project" value="GO_Central"/>
</dbReference>
<dbReference type="GO" id="GO:1904659">
    <property type="term" value="P:D-glucose transmembrane transport"/>
    <property type="evidence" value="ECO:0007669"/>
    <property type="project" value="InterPro"/>
</dbReference>
<dbReference type="GO" id="GO:0009401">
    <property type="term" value="P:phosphoenolpyruvate-dependent sugar phosphotransferase system"/>
    <property type="evidence" value="ECO:0000318"/>
    <property type="project" value="GO_Central"/>
</dbReference>
<dbReference type="CDD" id="cd00210">
    <property type="entry name" value="PTS_IIA_glc"/>
    <property type="match status" value="1"/>
</dbReference>
<dbReference type="CDD" id="cd00212">
    <property type="entry name" value="PTS_IIB_glc"/>
    <property type="match status" value="1"/>
</dbReference>
<dbReference type="FunFam" id="2.70.70.10:FF:000001">
    <property type="entry name" value="PTS system glucose-specific IIA component"/>
    <property type="match status" value="1"/>
</dbReference>
<dbReference type="FunFam" id="3.30.1360.60:FF:000001">
    <property type="entry name" value="PTS system glucose-specific IIBC component PtsG"/>
    <property type="match status" value="1"/>
</dbReference>
<dbReference type="Gene3D" id="2.70.70.10">
    <property type="entry name" value="Glucose Permease (Domain IIA)"/>
    <property type="match status" value="1"/>
</dbReference>
<dbReference type="Gene3D" id="3.30.1360.60">
    <property type="entry name" value="Glucose permease domain IIB"/>
    <property type="match status" value="1"/>
</dbReference>
<dbReference type="InterPro" id="IPR011055">
    <property type="entry name" value="Dup_hybrid_motif"/>
</dbReference>
<dbReference type="InterPro" id="IPR036878">
    <property type="entry name" value="Glu_permease_IIB"/>
</dbReference>
<dbReference type="InterPro" id="IPR018113">
    <property type="entry name" value="PTrfase_EIIB_Cys"/>
</dbReference>
<dbReference type="InterPro" id="IPR001127">
    <property type="entry name" value="PTS_EIIA_1_perm"/>
</dbReference>
<dbReference type="InterPro" id="IPR003352">
    <property type="entry name" value="PTS_EIIC"/>
</dbReference>
<dbReference type="InterPro" id="IPR013013">
    <property type="entry name" value="PTS_EIIC_1"/>
</dbReference>
<dbReference type="InterPro" id="IPR050429">
    <property type="entry name" value="PTS_Glucose_EIICBA"/>
</dbReference>
<dbReference type="InterPro" id="IPR001996">
    <property type="entry name" value="PTS_IIB_1"/>
</dbReference>
<dbReference type="InterPro" id="IPR011299">
    <property type="entry name" value="PTS_IIBC_glc"/>
</dbReference>
<dbReference type="NCBIfam" id="TIGR00826">
    <property type="entry name" value="EIIB_glc"/>
    <property type="match status" value="1"/>
</dbReference>
<dbReference type="NCBIfam" id="TIGR00830">
    <property type="entry name" value="PTBA"/>
    <property type="match status" value="1"/>
</dbReference>
<dbReference type="NCBIfam" id="TIGR02002">
    <property type="entry name" value="PTS-II-BC-glcB"/>
    <property type="match status" value="1"/>
</dbReference>
<dbReference type="PANTHER" id="PTHR30009">
    <property type="entry name" value="CYTOCHROME C-TYPE SYNTHESIS PROTEIN AND PTS TRANSMEMBRANE COMPONENT"/>
    <property type="match status" value="1"/>
</dbReference>
<dbReference type="PANTHER" id="PTHR30009:SF20">
    <property type="entry name" value="PTS SYSTEM GLUCOSE-SPECIFIC EIICB COMPONENT-RELATED"/>
    <property type="match status" value="1"/>
</dbReference>
<dbReference type="Pfam" id="PF00358">
    <property type="entry name" value="PTS_EIIA_1"/>
    <property type="match status" value="1"/>
</dbReference>
<dbReference type="Pfam" id="PF00367">
    <property type="entry name" value="PTS_EIIB"/>
    <property type="match status" value="1"/>
</dbReference>
<dbReference type="Pfam" id="PF02378">
    <property type="entry name" value="PTS_EIIC"/>
    <property type="match status" value="1"/>
</dbReference>
<dbReference type="SUPFAM" id="SSF51261">
    <property type="entry name" value="Duplicated hybrid motif"/>
    <property type="match status" value="1"/>
</dbReference>
<dbReference type="SUPFAM" id="SSF55604">
    <property type="entry name" value="Glucose permease domain IIB"/>
    <property type="match status" value="1"/>
</dbReference>
<dbReference type="PROSITE" id="PS51093">
    <property type="entry name" value="PTS_EIIA_TYPE_1"/>
    <property type="match status" value="1"/>
</dbReference>
<dbReference type="PROSITE" id="PS00371">
    <property type="entry name" value="PTS_EIIA_TYPE_1_HIS"/>
    <property type="match status" value="1"/>
</dbReference>
<dbReference type="PROSITE" id="PS51098">
    <property type="entry name" value="PTS_EIIB_TYPE_1"/>
    <property type="match status" value="1"/>
</dbReference>
<dbReference type="PROSITE" id="PS01035">
    <property type="entry name" value="PTS_EIIB_TYPE_1_CYS"/>
    <property type="match status" value="1"/>
</dbReference>
<dbReference type="PROSITE" id="PS51103">
    <property type="entry name" value="PTS_EIIC_TYPE_1"/>
    <property type="match status" value="1"/>
</dbReference>
<gene>
    <name type="primary">ptsG</name>
    <name type="synonym">glcA</name>
    <name type="ordered locus">SAOUHSC_00155</name>
</gene>
<feature type="chain" id="PRO_0000351391" description="PTS system glucose-specific EIICBA component">
    <location>
        <begin position="1"/>
        <end position="681"/>
    </location>
</feature>
<feature type="transmembrane region" description="Helical" evidence="4">
    <location>
        <begin position="16"/>
        <end position="36"/>
    </location>
</feature>
<feature type="transmembrane region" description="Helical" evidence="4">
    <location>
        <begin position="73"/>
        <end position="93"/>
    </location>
</feature>
<feature type="transmembrane region" description="Helical" evidence="4">
    <location>
        <begin position="126"/>
        <end position="146"/>
    </location>
</feature>
<feature type="transmembrane region" description="Helical" evidence="4">
    <location>
        <begin position="170"/>
        <end position="190"/>
    </location>
</feature>
<feature type="transmembrane region" description="Helical" evidence="4">
    <location>
        <begin position="199"/>
        <end position="219"/>
    </location>
</feature>
<feature type="transmembrane region" description="Helical" evidence="4">
    <location>
        <begin position="273"/>
        <end position="293"/>
    </location>
</feature>
<feature type="transmembrane region" description="Helical" evidence="4">
    <location>
        <begin position="303"/>
        <end position="323"/>
    </location>
</feature>
<feature type="transmembrane region" description="Helical" evidence="4">
    <location>
        <begin position="328"/>
        <end position="348"/>
    </location>
</feature>
<feature type="transmembrane region" description="Helical" evidence="4">
    <location>
        <begin position="355"/>
        <end position="375"/>
    </location>
</feature>
<feature type="transmembrane region" description="Helical" evidence="4">
    <location>
        <begin position="383"/>
        <end position="403"/>
    </location>
</feature>
<feature type="domain" description="PTS EIIC type-1" evidence="4">
    <location>
        <begin position="3"/>
        <end position="414"/>
    </location>
</feature>
<feature type="domain" description="PTS EIIB type-1" evidence="3">
    <location>
        <begin position="425"/>
        <end position="506"/>
    </location>
</feature>
<feature type="domain" description="PTS EIIA type-1" evidence="2">
    <location>
        <begin position="551"/>
        <end position="655"/>
    </location>
</feature>
<feature type="active site" description="Phosphocysteine intermediate; for EIIB activity" evidence="3">
    <location>
        <position position="447"/>
    </location>
</feature>
<feature type="active site" description="Tele-phosphohistidine intermediate; for EIIA activity" evidence="2">
    <location>
        <position position="603"/>
    </location>
</feature>
<sequence length="681" mass="73925">MRKKLFGQLQRIGKALMLPVAILPAAGLLLAIGTAMQGESLQHYLPFIQNGGVQTVAKLMTGAGGIIFDNLPMIFALGVAIGLAGGDGVAAIAAFVGYIIMNKTMGDFLQVTPKNIGDPASGYASILGIPTLQTGVFGGIIIGALAAWCYNKFYNINLPSYLGFFAGKRFVPIMMATTSFILAFPMALIWPTIQSGLNAFSTGLLDSNTGVAVFLFGFIKRLLIPFGLHHIFHAPFWFEFGSWKNAAGEIIHGDQRIFIEQIREGAHLTAGKFMQGEFPVMMFGLPAAALAIYHTAKPENKKVVAGLMGSAALTSFLTGITEPLEFSFLFVAPLLFFIHAVLDGLSFLTLYLLDLHLGYTFSGGFIDYFLLGILPNKTQWWLVIPVGLVYAVIYYFVFRFLIVKLKYKTPGREDKQSQAATASATELPYAVLEAMGGKANIKHLDACITRLRVEVNDKSKVDVPGLKDLGASGVLEVGNNMQAIFGPKSDQIKHEMQQIMNGQVVENPTTMEDDKDETVVVAEDKSATSELSHIVHAPLTGEVTPLSEVPDQVFSEKMMGDGIAIKPSQGEVRAPFNGKVQMIFPTKHAIGLVSDSGLELLIHIGLDTVKLNGEGFTLHVEEGQEVKQGDLLINFDLDYIRNHAKSDITPIIVTQGNITNLDFKQGEHGNISFGDQLFEAK</sequence>
<evidence type="ECO:0000250" key="1">
    <source>
        <dbReference type="UniProtKB" id="Q57071"/>
    </source>
</evidence>
<evidence type="ECO:0000255" key="2">
    <source>
        <dbReference type="PROSITE-ProRule" id="PRU00416"/>
    </source>
</evidence>
<evidence type="ECO:0000255" key="3">
    <source>
        <dbReference type="PROSITE-ProRule" id="PRU00421"/>
    </source>
</evidence>
<evidence type="ECO:0000255" key="4">
    <source>
        <dbReference type="PROSITE-ProRule" id="PRU00426"/>
    </source>
</evidence>
<evidence type="ECO:0000305" key="5"/>